<proteinExistence type="inferred from homology"/>
<feature type="chain" id="PRO_0000235711" description="Ribonuclease HII">
    <location>
        <begin position="1"/>
        <end position="217"/>
    </location>
</feature>
<feature type="domain" description="RNase H type-2" evidence="2">
    <location>
        <begin position="27"/>
        <end position="216"/>
    </location>
</feature>
<feature type="binding site" evidence="1">
    <location>
        <position position="33"/>
    </location>
    <ligand>
        <name>a divalent metal cation</name>
        <dbReference type="ChEBI" id="CHEBI:60240"/>
    </ligand>
</feature>
<feature type="binding site" evidence="1">
    <location>
        <position position="34"/>
    </location>
    <ligand>
        <name>a divalent metal cation</name>
        <dbReference type="ChEBI" id="CHEBI:60240"/>
    </ligand>
</feature>
<feature type="binding site" evidence="1">
    <location>
        <position position="126"/>
    </location>
    <ligand>
        <name>a divalent metal cation</name>
        <dbReference type="ChEBI" id="CHEBI:60240"/>
    </ligand>
</feature>
<protein>
    <recommendedName>
        <fullName evidence="1">Ribonuclease HII</fullName>
        <shortName evidence="1">RNase HII</shortName>
        <ecNumber evidence="1">3.1.26.4</ecNumber>
    </recommendedName>
</protein>
<comment type="function">
    <text evidence="1">Endonuclease that specifically degrades the RNA of RNA-DNA hybrids.</text>
</comment>
<comment type="catalytic activity">
    <reaction evidence="1">
        <text>Endonucleolytic cleavage to 5'-phosphomonoester.</text>
        <dbReference type="EC" id="3.1.26.4"/>
    </reaction>
</comment>
<comment type="cofactor">
    <cofactor evidence="1">
        <name>Mn(2+)</name>
        <dbReference type="ChEBI" id="CHEBI:29035"/>
    </cofactor>
    <cofactor evidence="1">
        <name>Mg(2+)</name>
        <dbReference type="ChEBI" id="CHEBI:18420"/>
    </cofactor>
    <text evidence="1">Manganese or magnesium. Binds 1 divalent metal ion per monomer in the absence of substrate. May bind a second metal ion after substrate binding.</text>
</comment>
<comment type="subcellular location">
    <subcellularLocation>
        <location evidence="1">Cytoplasm</location>
    </subcellularLocation>
</comment>
<comment type="similarity">
    <text evidence="1">Belongs to the RNase HII family.</text>
</comment>
<accession>Q3KMZ3</accession>
<reference key="1">
    <citation type="journal article" date="2005" name="Infect. Immun.">
        <title>Comparative genomic analysis of Chlamydia trachomatis oculotropic and genitotropic strains.</title>
        <authorList>
            <person name="Carlson J.H."/>
            <person name="Porcella S.F."/>
            <person name="McClarty G."/>
            <person name="Caldwell H.D."/>
        </authorList>
    </citation>
    <scope>NUCLEOTIDE SEQUENCE [LARGE SCALE GENOMIC DNA]</scope>
    <source>
        <strain>ATCC VR-571B / DSM 19440 / HAR-13</strain>
    </source>
</reference>
<sequence length="217" mass="23947">MKSTVEQAMLFEEKSIFENQAIEQGYSRVAGVDEAGRGPLAGPVVAGACILPRGKVFLGIDDSKKLTPKQRRYLYELLLEDPEVDCGVGVVSVERIDEINILEATKEAMVQAIASLQSTPDFLLVDGLFLPHKVPSLKIIKGDARSVSIAAASIIAKEYRDELMRKLHVEYPEYGFDKHKGYGTAAHLQALKHFGPCVYHRKSFSPVKESIQEGVCQ</sequence>
<organism>
    <name type="scientific">Chlamydia trachomatis serovar A (strain ATCC VR-571B / DSM 19440 / HAR-13)</name>
    <dbReference type="NCBI Taxonomy" id="315277"/>
    <lineage>
        <taxon>Bacteria</taxon>
        <taxon>Pseudomonadati</taxon>
        <taxon>Chlamydiota</taxon>
        <taxon>Chlamydiia</taxon>
        <taxon>Chlamydiales</taxon>
        <taxon>Chlamydiaceae</taxon>
        <taxon>Chlamydia/Chlamydophila group</taxon>
        <taxon>Chlamydia</taxon>
    </lineage>
</organism>
<evidence type="ECO:0000255" key="1">
    <source>
        <dbReference type="HAMAP-Rule" id="MF_00052"/>
    </source>
</evidence>
<evidence type="ECO:0000255" key="2">
    <source>
        <dbReference type="PROSITE-ProRule" id="PRU01319"/>
    </source>
</evidence>
<gene>
    <name evidence="1" type="primary">rnhB</name>
    <name type="ordered locus">CTA_0031</name>
</gene>
<dbReference type="EC" id="3.1.26.4" evidence="1"/>
<dbReference type="EMBL" id="CP000051">
    <property type="protein sequence ID" value="AAX50279.1"/>
    <property type="molecule type" value="Genomic_DNA"/>
</dbReference>
<dbReference type="RefSeq" id="WP_011324528.1">
    <property type="nucleotide sequence ID" value="NC_007429.1"/>
</dbReference>
<dbReference type="SMR" id="Q3KMZ3"/>
<dbReference type="KEGG" id="cta:CTA_0031"/>
<dbReference type="HOGENOM" id="CLU_036532_2_1_0"/>
<dbReference type="Proteomes" id="UP000002532">
    <property type="component" value="Chromosome"/>
</dbReference>
<dbReference type="GO" id="GO:0005737">
    <property type="term" value="C:cytoplasm"/>
    <property type="evidence" value="ECO:0007669"/>
    <property type="project" value="UniProtKB-SubCell"/>
</dbReference>
<dbReference type="GO" id="GO:0032299">
    <property type="term" value="C:ribonuclease H2 complex"/>
    <property type="evidence" value="ECO:0007669"/>
    <property type="project" value="TreeGrafter"/>
</dbReference>
<dbReference type="GO" id="GO:0030145">
    <property type="term" value="F:manganese ion binding"/>
    <property type="evidence" value="ECO:0007669"/>
    <property type="project" value="UniProtKB-UniRule"/>
</dbReference>
<dbReference type="GO" id="GO:0003723">
    <property type="term" value="F:RNA binding"/>
    <property type="evidence" value="ECO:0007669"/>
    <property type="project" value="InterPro"/>
</dbReference>
<dbReference type="GO" id="GO:0004523">
    <property type="term" value="F:RNA-DNA hybrid ribonuclease activity"/>
    <property type="evidence" value="ECO:0007669"/>
    <property type="project" value="UniProtKB-UniRule"/>
</dbReference>
<dbReference type="GO" id="GO:0043137">
    <property type="term" value="P:DNA replication, removal of RNA primer"/>
    <property type="evidence" value="ECO:0007669"/>
    <property type="project" value="TreeGrafter"/>
</dbReference>
<dbReference type="GO" id="GO:0006298">
    <property type="term" value="P:mismatch repair"/>
    <property type="evidence" value="ECO:0007669"/>
    <property type="project" value="TreeGrafter"/>
</dbReference>
<dbReference type="CDD" id="cd07182">
    <property type="entry name" value="RNase_HII_bacteria_HII_like"/>
    <property type="match status" value="1"/>
</dbReference>
<dbReference type="FunFam" id="3.30.420.10:FF:000006">
    <property type="entry name" value="Ribonuclease HII"/>
    <property type="match status" value="1"/>
</dbReference>
<dbReference type="Gene3D" id="3.30.420.10">
    <property type="entry name" value="Ribonuclease H-like superfamily/Ribonuclease H"/>
    <property type="match status" value="1"/>
</dbReference>
<dbReference type="HAMAP" id="MF_00052_B">
    <property type="entry name" value="RNase_HII_B"/>
    <property type="match status" value="1"/>
</dbReference>
<dbReference type="InterPro" id="IPR022898">
    <property type="entry name" value="RNase_HII"/>
</dbReference>
<dbReference type="InterPro" id="IPR001352">
    <property type="entry name" value="RNase_HII/HIII"/>
</dbReference>
<dbReference type="InterPro" id="IPR024567">
    <property type="entry name" value="RNase_HII/HIII_dom"/>
</dbReference>
<dbReference type="InterPro" id="IPR012337">
    <property type="entry name" value="RNaseH-like_sf"/>
</dbReference>
<dbReference type="InterPro" id="IPR036397">
    <property type="entry name" value="RNaseH_sf"/>
</dbReference>
<dbReference type="NCBIfam" id="NF000594">
    <property type="entry name" value="PRK00015.1-1"/>
    <property type="match status" value="1"/>
</dbReference>
<dbReference type="NCBIfam" id="NF000595">
    <property type="entry name" value="PRK00015.1-3"/>
    <property type="match status" value="1"/>
</dbReference>
<dbReference type="PANTHER" id="PTHR10954">
    <property type="entry name" value="RIBONUCLEASE H2 SUBUNIT A"/>
    <property type="match status" value="1"/>
</dbReference>
<dbReference type="PANTHER" id="PTHR10954:SF18">
    <property type="entry name" value="RIBONUCLEASE HII"/>
    <property type="match status" value="1"/>
</dbReference>
<dbReference type="Pfam" id="PF01351">
    <property type="entry name" value="RNase_HII"/>
    <property type="match status" value="1"/>
</dbReference>
<dbReference type="SUPFAM" id="SSF53098">
    <property type="entry name" value="Ribonuclease H-like"/>
    <property type="match status" value="1"/>
</dbReference>
<dbReference type="PROSITE" id="PS51975">
    <property type="entry name" value="RNASE_H_2"/>
    <property type="match status" value="1"/>
</dbReference>
<keyword id="KW-0963">Cytoplasm</keyword>
<keyword id="KW-0255">Endonuclease</keyword>
<keyword id="KW-0378">Hydrolase</keyword>
<keyword id="KW-0464">Manganese</keyword>
<keyword id="KW-0479">Metal-binding</keyword>
<keyword id="KW-0540">Nuclease</keyword>
<name>RNH2_CHLTA</name>